<proteinExistence type="inferred from homology"/>
<organism>
    <name type="scientific">Geobacillus kaustophilus (strain HTA426)</name>
    <dbReference type="NCBI Taxonomy" id="235909"/>
    <lineage>
        <taxon>Bacteria</taxon>
        <taxon>Bacillati</taxon>
        <taxon>Bacillota</taxon>
        <taxon>Bacilli</taxon>
        <taxon>Bacillales</taxon>
        <taxon>Anoxybacillaceae</taxon>
        <taxon>Geobacillus</taxon>
        <taxon>Geobacillus thermoleovorans group</taxon>
    </lineage>
</organism>
<reference key="1">
    <citation type="journal article" date="2004" name="Nucleic Acids Res.">
        <title>Thermoadaptation trait revealed by the genome sequence of thermophilic Geobacillus kaustophilus.</title>
        <authorList>
            <person name="Takami H."/>
            <person name="Takaki Y."/>
            <person name="Chee G.-J."/>
            <person name="Nishi S."/>
            <person name="Shimamura S."/>
            <person name="Suzuki H."/>
            <person name="Matsui S."/>
            <person name="Uchiyama I."/>
        </authorList>
    </citation>
    <scope>NUCLEOTIDE SEQUENCE [LARGE SCALE GENOMIC DNA]</scope>
    <source>
        <strain>HTA426</strain>
    </source>
</reference>
<name>CINA_GEOKA</name>
<accession>Q5L0F7</accession>
<keyword id="KW-1185">Reference proteome</keyword>
<protein>
    <recommendedName>
        <fullName evidence="1">Putative competence-damage inducible protein</fullName>
    </recommendedName>
</protein>
<feature type="chain" id="PRO_0000156760" description="Putative competence-damage inducible protein">
    <location>
        <begin position="1"/>
        <end position="414"/>
    </location>
</feature>
<evidence type="ECO:0000255" key="1">
    <source>
        <dbReference type="HAMAP-Rule" id="MF_00226"/>
    </source>
</evidence>
<sequence>MNAEIIAVGSELLLGQIANTNAQFLSQQLAMLGINVYFHTVVGDNAGRLEQAVKTAQTRANLIIFTGGLGPTKDDLTKETIARLLGRRLVIDEEALRAIEVYFARTNRPMTENNKKQALVLEGSTVLKNEHGMAPGMALVADGITYMLLPGPPKEMRPMFKKYGNAFLRRTFSLSERIESRVLRFFGIGESALETAIADLIDAQSNPTIAPLAGDGEVTLRLTAKHQDEAEAKRLLDEVESAILARVGRHCYGYNDETLFTKTLERLKERGWTIASAESLTGGLFLEQLTALPGASQVVQGGVVCYTNGVKEQVLGIPRPLLEAEGAVSEPCARLLAENVRAMCDADIGISFTGVAGPDPLEGHPPGTVYIGIAVRGRDATVHRLMLSGTRDAIRIRTAKYGCFFLLEMLAADC</sequence>
<comment type="similarity">
    <text evidence="1">Belongs to the CinA family.</text>
</comment>
<gene>
    <name evidence="1" type="primary">cinA</name>
    <name type="ordered locus">GK1294</name>
</gene>
<dbReference type="EMBL" id="BA000043">
    <property type="protein sequence ID" value="BAD75579.1"/>
    <property type="molecule type" value="Genomic_DNA"/>
</dbReference>
<dbReference type="RefSeq" id="WP_011230794.1">
    <property type="nucleotide sequence ID" value="NC_006510.1"/>
</dbReference>
<dbReference type="SMR" id="Q5L0F7"/>
<dbReference type="STRING" id="235909.GK1294"/>
<dbReference type="KEGG" id="gka:GK1294"/>
<dbReference type="eggNOG" id="COG1058">
    <property type="taxonomic scope" value="Bacteria"/>
</dbReference>
<dbReference type="eggNOG" id="COG1546">
    <property type="taxonomic scope" value="Bacteria"/>
</dbReference>
<dbReference type="HOGENOM" id="CLU_030805_9_3_9"/>
<dbReference type="Proteomes" id="UP000001172">
    <property type="component" value="Chromosome"/>
</dbReference>
<dbReference type="CDD" id="cd00885">
    <property type="entry name" value="cinA"/>
    <property type="match status" value="1"/>
</dbReference>
<dbReference type="Gene3D" id="3.30.70.2860">
    <property type="match status" value="1"/>
</dbReference>
<dbReference type="Gene3D" id="3.90.950.20">
    <property type="entry name" value="CinA-like"/>
    <property type="match status" value="1"/>
</dbReference>
<dbReference type="Gene3D" id="3.40.980.10">
    <property type="entry name" value="MoaB/Mog-like domain"/>
    <property type="match status" value="1"/>
</dbReference>
<dbReference type="HAMAP" id="MF_00226_B">
    <property type="entry name" value="CinA_B"/>
    <property type="match status" value="1"/>
</dbReference>
<dbReference type="InterPro" id="IPR050101">
    <property type="entry name" value="CinA"/>
</dbReference>
<dbReference type="InterPro" id="IPR036653">
    <property type="entry name" value="CinA-like_C"/>
</dbReference>
<dbReference type="InterPro" id="IPR008136">
    <property type="entry name" value="CinA_C"/>
</dbReference>
<dbReference type="InterPro" id="IPR041424">
    <property type="entry name" value="CinA_KH"/>
</dbReference>
<dbReference type="InterPro" id="IPR008135">
    <property type="entry name" value="Competence-induced_CinA"/>
</dbReference>
<dbReference type="InterPro" id="IPR036425">
    <property type="entry name" value="MoaB/Mog-like_dom_sf"/>
</dbReference>
<dbReference type="InterPro" id="IPR001453">
    <property type="entry name" value="MoaB/Mog_dom"/>
</dbReference>
<dbReference type="NCBIfam" id="TIGR00200">
    <property type="entry name" value="cinA_nterm"/>
    <property type="match status" value="1"/>
</dbReference>
<dbReference type="NCBIfam" id="TIGR00177">
    <property type="entry name" value="molyb_syn"/>
    <property type="match status" value="1"/>
</dbReference>
<dbReference type="NCBIfam" id="TIGR00199">
    <property type="entry name" value="PncC_domain"/>
    <property type="match status" value="1"/>
</dbReference>
<dbReference type="NCBIfam" id="NF001813">
    <property type="entry name" value="PRK00549.1"/>
    <property type="match status" value="1"/>
</dbReference>
<dbReference type="PANTHER" id="PTHR13939">
    <property type="entry name" value="NICOTINAMIDE-NUCLEOTIDE AMIDOHYDROLASE PNCC"/>
    <property type="match status" value="1"/>
</dbReference>
<dbReference type="PANTHER" id="PTHR13939:SF0">
    <property type="entry name" value="NMN AMIDOHYDROLASE-LIKE PROTEIN YFAY"/>
    <property type="match status" value="1"/>
</dbReference>
<dbReference type="Pfam" id="PF02464">
    <property type="entry name" value="CinA"/>
    <property type="match status" value="1"/>
</dbReference>
<dbReference type="Pfam" id="PF18146">
    <property type="entry name" value="CinA_KH"/>
    <property type="match status" value="1"/>
</dbReference>
<dbReference type="Pfam" id="PF00994">
    <property type="entry name" value="MoCF_biosynth"/>
    <property type="match status" value="1"/>
</dbReference>
<dbReference type="PIRSF" id="PIRSF006728">
    <property type="entry name" value="CinA"/>
    <property type="match status" value="1"/>
</dbReference>
<dbReference type="SMART" id="SM00852">
    <property type="entry name" value="MoCF_biosynth"/>
    <property type="match status" value="1"/>
</dbReference>
<dbReference type="SUPFAM" id="SSF142433">
    <property type="entry name" value="CinA-like"/>
    <property type="match status" value="1"/>
</dbReference>
<dbReference type="SUPFAM" id="SSF53218">
    <property type="entry name" value="Molybdenum cofactor biosynthesis proteins"/>
    <property type="match status" value="1"/>
</dbReference>